<name>YEJL_ECO81</name>
<organism>
    <name type="scientific">Escherichia coli O81 (strain ED1a)</name>
    <dbReference type="NCBI Taxonomy" id="585397"/>
    <lineage>
        <taxon>Bacteria</taxon>
        <taxon>Pseudomonadati</taxon>
        <taxon>Pseudomonadota</taxon>
        <taxon>Gammaproteobacteria</taxon>
        <taxon>Enterobacterales</taxon>
        <taxon>Enterobacteriaceae</taxon>
        <taxon>Escherichia</taxon>
    </lineage>
</organism>
<comment type="similarity">
    <text evidence="1">Belongs to the UPF0352 family.</text>
</comment>
<accession>B7MXK3</accession>
<evidence type="ECO:0000255" key="1">
    <source>
        <dbReference type="HAMAP-Rule" id="MF_00816"/>
    </source>
</evidence>
<proteinExistence type="inferred from homology"/>
<dbReference type="EMBL" id="CU928162">
    <property type="protein sequence ID" value="CAR08819.2"/>
    <property type="molecule type" value="Genomic_DNA"/>
</dbReference>
<dbReference type="RefSeq" id="WP_001135667.1">
    <property type="nucleotide sequence ID" value="NC_011745.1"/>
</dbReference>
<dbReference type="SMR" id="B7MXK3"/>
<dbReference type="KEGG" id="ecq:ECED1_2638"/>
<dbReference type="HOGENOM" id="CLU_175457_0_0_6"/>
<dbReference type="Proteomes" id="UP000000748">
    <property type="component" value="Chromosome"/>
</dbReference>
<dbReference type="FunFam" id="1.10.3390.10:FF:000001">
    <property type="entry name" value="UPF0352 protein YejL"/>
    <property type="match status" value="1"/>
</dbReference>
<dbReference type="Gene3D" id="1.10.3390.10">
    <property type="entry name" value="YejL-like"/>
    <property type="match status" value="1"/>
</dbReference>
<dbReference type="HAMAP" id="MF_00816">
    <property type="entry name" value="UPF0352"/>
    <property type="match status" value="1"/>
</dbReference>
<dbReference type="InterPro" id="IPR009857">
    <property type="entry name" value="UPF0352"/>
</dbReference>
<dbReference type="InterPro" id="IPR023202">
    <property type="entry name" value="YejL_sf"/>
</dbReference>
<dbReference type="NCBIfam" id="NF010242">
    <property type="entry name" value="PRK13689.1"/>
    <property type="match status" value="1"/>
</dbReference>
<dbReference type="Pfam" id="PF07208">
    <property type="entry name" value="DUF1414"/>
    <property type="match status" value="1"/>
</dbReference>
<dbReference type="PIRSF" id="PIRSF006188">
    <property type="entry name" value="UCP006188"/>
    <property type="match status" value="1"/>
</dbReference>
<dbReference type="SUPFAM" id="SSF158651">
    <property type="entry name" value="YejL-like"/>
    <property type="match status" value="1"/>
</dbReference>
<reference key="1">
    <citation type="journal article" date="2009" name="PLoS Genet.">
        <title>Organised genome dynamics in the Escherichia coli species results in highly diverse adaptive paths.</title>
        <authorList>
            <person name="Touchon M."/>
            <person name="Hoede C."/>
            <person name="Tenaillon O."/>
            <person name="Barbe V."/>
            <person name="Baeriswyl S."/>
            <person name="Bidet P."/>
            <person name="Bingen E."/>
            <person name="Bonacorsi S."/>
            <person name="Bouchier C."/>
            <person name="Bouvet O."/>
            <person name="Calteau A."/>
            <person name="Chiapello H."/>
            <person name="Clermont O."/>
            <person name="Cruveiller S."/>
            <person name="Danchin A."/>
            <person name="Diard M."/>
            <person name="Dossat C."/>
            <person name="Karoui M.E."/>
            <person name="Frapy E."/>
            <person name="Garry L."/>
            <person name="Ghigo J.M."/>
            <person name="Gilles A.M."/>
            <person name="Johnson J."/>
            <person name="Le Bouguenec C."/>
            <person name="Lescat M."/>
            <person name="Mangenot S."/>
            <person name="Martinez-Jehanne V."/>
            <person name="Matic I."/>
            <person name="Nassif X."/>
            <person name="Oztas S."/>
            <person name="Petit M.A."/>
            <person name="Pichon C."/>
            <person name="Rouy Z."/>
            <person name="Ruf C.S."/>
            <person name="Schneider D."/>
            <person name="Tourret J."/>
            <person name="Vacherie B."/>
            <person name="Vallenet D."/>
            <person name="Medigue C."/>
            <person name="Rocha E.P.C."/>
            <person name="Denamur E."/>
        </authorList>
    </citation>
    <scope>NUCLEOTIDE SEQUENCE [LARGE SCALE GENOMIC DNA]</scope>
    <source>
        <strain>ED1a</strain>
    </source>
</reference>
<feature type="chain" id="PRO_1000148650" description="UPF0352 protein YejL">
    <location>
        <begin position="1"/>
        <end position="75"/>
    </location>
</feature>
<protein>
    <recommendedName>
        <fullName evidence="1">UPF0352 protein YejL</fullName>
    </recommendedName>
</protein>
<gene>
    <name evidence="1" type="primary">yejL</name>
    <name type="ordered locus">ECED1_2638</name>
</gene>
<sequence>MPQISRYSDEQVEQLLAELLNVLEKHKAPTDLSLMVLGNMVTNLINTSIAPAQRQAIANSFARALQSSINEDKAH</sequence>